<reference key="1">
    <citation type="journal article" date="2007" name="PLoS ONE">
        <title>Analysis of the neurotoxin complex genes in Clostridium botulinum A1-A4 and B1 strains: BoNT/A3, /Ba4 and /B1 clusters are located within plasmids.</title>
        <authorList>
            <person name="Smith T.J."/>
            <person name="Hill K.K."/>
            <person name="Foley B.T."/>
            <person name="Detter J.C."/>
            <person name="Munk A.C."/>
            <person name="Bruce D.C."/>
            <person name="Doggett N.A."/>
            <person name="Smith L.A."/>
            <person name="Marks J.D."/>
            <person name="Xie G."/>
            <person name="Brettin T.S."/>
        </authorList>
    </citation>
    <scope>NUCLEOTIDE SEQUENCE [LARGE SCALE GENOMIC DNA]</scope>
    <source>
        <strain>Okra / Type B1</strain>
    </source>
</reference>
<proteinExistence type="inferred from homology"/>
<protein>
    <recommendedName>
        <fullName evidence="1">Large ribosomal subunit protein uL6</fullName>
    </recommendedName>
    <alternativeName>
        <fullName evidence="2">50S ribosomal protein L6</fullName>
    </alternativeName>
</protein>
<feature type="chain" id="PRO_1000143965" description="Large ribosomal subunit protein uL6">
    <location>
        <begin position="1"/>
        <end position="180"/>
    </location>
</feature>
<organism>
    <name type="scientific">Clostridium botulinum (strain Okra / Type B1)</name>
    <dbReference type="NCBI Taxonomy" id="498213"/>
    <lineage>
        <taxon>Bacteria</taxon>
        <taxon>Bacillati</taxon>
        <taxon>Bacillota</taxon>
        <taxon>Clostridia</taxon>
        <taxon>Eubacteriales</taxon>
        <taxon>Clostridiaceae</taxon>
        <taxon>Clostridium</taxon>
    </lineage>
</organism>
<accession>B1IGD9</accession>
<name>RL6_CLOBK</name>
<evidence type="ECO:0000255" key="1">
    <source>
        <dbReference type="HAMAP-Rule" id="MF_01365"/>
    </source>
</evidence>
<evidence type="ECO:0000305" key="2"/>
<dbReference type="EMBL" id="CP000939">
    <property type="protein sequence ID" value="ACA46502.1"/>
    <property type="molecule type" value="Genomic_DNA"/>
</dbReference>
<dbReference type="RefSeq" id="WP_003401729.1">
    <property type="nucleotide sequence ID" value="NC_010516.1"/>
</dbReference>
<dbReference type="SMR" id="B1IGD9"/>
<dbReference type="KEGG" id="cbb:CLD_1039"/>
<dbReference type="HOGENOM" id="CLU_065464_1_2_9"/>
<dbReference type="Proteomes" id="UP000008541">
    <property type="component" value="Chromosome"/>
</dbReference>
<dbReference type="GO" id="GO:0022625">
    <property type="term" value="C:cytosolic large ribosomal subunit"/>
    <property type="evidence" value="ECO:0007669"/>
    <property type="project" value="TreeGrafter"/>
</dbReference>
<dbReference type="GO" id="GO:0019843">
    <property type="term" value="F:rRNA binding"/>
    <property type="evidence" value="ECO:0007669"/>
    <property type="project" value="UniProtKB-UniRule"/>
</dbReference>
<dbReference type="GO" id="GO:0003735">
    <property type="term" value="F:structural constituent of ribosome"/>
    <property type="evidence" value="ECO:0007669"/>
    <property type="project" value="InterPro"/>
</dbReference>
<dbReference type="GO" id="GO:0002181">
    <property type="term" value="P:cytoplasmic translation"/>
    <property type="evidence" value="ECO:0007669"/>
    <property type="project" value="TreeGrafter"/>
</dbReference>
<dbReference type="FunFam" id="3.90.930.12:FF:000001">
    <property type="entry name" value="50S ribosomal protein L6"/>
    <property type="match status" value="1"/>
</dbReference>
<dbReference type="FunFam" id="3.90.930.12:FF:000002">
    <property type="entry name" value="50S ribosomal protein L6"/>
    <property type="match status" value="1"/>
</dbReference>
<dbReference type="Gene3D" id="3.90.930.12">
    <property type="entry name" value="Ribosomal protein L6, alpha-beta domain"/>
    <property type="match status" value="2"/>
</dbReference>
<dbReference type="HAMAP" id="MF_01365_B">
    <property type="entry name" value="Ribosomal_uL6_B"/>
    <property type="match status" value="1"/>
</dbReference>
<dbReference type="InterPro" id="IPR000702">
    <property type="entry name" value="Ribosomal_uL6-like"/>
</dbReference>
<dbReference type="InterPro" id="IPR036789">
    <property type="entry name" value="Ribosomal_uL6-like_a/b-dom_sf"/>
</dbReference>
<dbReference type="InterPro" id="IPR020040">
    <property type="entry name" value="Ribosomal_uL6_a/b-dom"/>
</dbReference>
<dbReference type="InterPro" id="IPR019906">
    <property type="entry name" value="Ribosomal_uL6_bac-type"/>
</dbReference>
<dbReference type="InterPro" id="IPR002358">
    <property type="entry name" value="Ribosomal_uL6_CS"/>
</dbReference>
<dbReference type="NCBIfam" id="TIGR03654">
    <property type="entry name" value="L6_bact"/>
    <property type="match status" value="1"/>
</dbReference>
<dbReference type="PANTHER" id="PTHR11655">
    <property type="entry name" value="60S/50S RIBOSOMAL PROTEIN L6/L9"/>
    <property type="match status" value="1"/>
</dbReference>
<dbReference type="PANTHER" id="PTHR11655:SF14">
    <property type="entry name" value="LARGE RIBOSOMAL SUBUNIT PROTEIN UL6M"/>
    <property type="match status" value="1"/>
</dbReference>
<dbReference type="Pfam" id="PF00347">
    <property type="entry name" value="Ribosomal_L6"/>
    <property type="match status" value="2"/>
</dbReference>
<dbReference type="PIRSF" id="PIRSF002162">
    <property type="entry name" value="Ribosomal_L6"/>
    <property type="match status" value="1"/>
</dbReference>
<dbReference type="PRINTS" id="PR00059">
    <property type="entry name" value="RIBOSOMALL6"/>
</dbReference>
<dbReference type="SUPFAM" id="SSF56053">
    <property type="entry name" value="Ribosomal protein L6"/>
    <property type="match status" value="2"/>
</dbReference>
<dbReference type="PROSITE" id="PS00525">
    <property type="entry name" value="RIBOSOMAL_L6_1"/>
    <property type="match status" value="1"/>
</dbReference>
<sequence>MSRVGKLPVAIPNGVTVTVTPDNVVTVKGPKGELVKAMSNKINIAVEDNSVVVTRDNDHKDVRALHGLTRALINNMVTGVNEGYVKTLELVGVGYRAQLQGKKLVLSLGFSHPVEMEAVSGVEFEVEGGTKVKVKGIDKELVGAVAADIRKWRKPEPYKGKGIKYENEVIRRKEGKTGKK</sequence>
<comment type="function">
    <text evidence="1">This protein binds to the 23S rRNA, and is important in its secondary structure. It is located near the subunit interface in the base of the L7/L12 stalk, and near the tRNA binding site of the peptidyltransferase center.</text>
</comment>
<comment type="subunit">
    <text evidence="1">Part of the 50S ribosomal subunit.</text>
</comment>
<comment type="similarity">
    <text evidence="1">Belongs to the universal ribosomal protein uL6 family.</text>
</comment>
<gene>
    <name evidence="1" type="primary">rplF</name>
    <name type="ordered locus">CLD_1039</name>
</gene>
<keyword id="KW-0687">Ribonucleoprotein</keyword>
<keyword id="KW-0689">Ribosomal protein</keyword>
<keyword id="KW-0694">RNA-binding</keyword>
<keyword id="KW-0699">rRNA-binding</keyword>